<gene>
    <name evidence="1" type="primary">nrdR</name>
    <name type="ordered locus">SAK_1637</name>
</gene>
<accession>Q3JZR3</accession>
<proteinExistence type="inferred from homology"/>
<sequence length="159" mass="18473">MRCPKCGYNKSSVVDSRQAEEGTTIRRRRECEKCGNRFTTFERLEELPLLVIKKDGTREQFSRDKILNGIIQSAQKRPVSSEDIENCILRIERKIRSEYEDEVSSITIGNLVMDELAELDEITYVRFASVYKSFKDVDEIEELLQQITKRVRSKKSGSV</sequence>
<reference key="1">
    <citation type="journal article" date="2005" name="Proc. Natl. Acad. Sci. U.S.A.">
        <title>Genome analysis of multiple pathogenic isolates of Streptococcus agalactiae: implications for the microbial 'pan-genome'.</title>
        <authorList>
            <person name="Tettelin H."/>
            <person name="Masignani V."/>
            <person name="Cieslewicz M.J."/>
            <person name="Donati C."/>
            <person name="Medini D."/>
            <person name="Ward N.L."/>
            <person name="Angiuoli S.V."/>
            <person name="Crabtree J."/>
            <person name="Jones A.L."/>
            <person name="Durkin A.S."/>
            <person name="DeBoy R.T."/>
            <person name="Davidsen T.M."/>
            <person name="Mora M."/>
            <person name="Scarselli M."/>
            <person name="Margarit y Ros I."/>
            <person name="Peterson J.D."/>
            <person name="Hauser C.R."/>
            <person name="Sundaram J.P."/>
            <person name="Nelson W.C."/>
            <person name="Madupu R."/>
            <person name="Brinkac L.M."/>
            <person name="Dodson R.J."/>
            <person name="Rosovitz M.J."/>
            <person name="Sullivan S.A."/>
            <person name="Daugherty S.C."/>
            <person name="Haft D.H."/>
            <person name="Selengut J."/>
            <person name="Gwinn M.L."/>
            <person name="Zhou L."/>
            <person name="Zafar N."/>
            <person name="Khouri H."/>
            <person name="Radune D."/>
            <person name="Dimitrov G."/>
            <person name="Watkins K."/>
            <person name="O'Connor K.J."/>
            <person name="Smith S."/>
            <person name="Utterback T.R."/>
            <person name="White O."/>
            <person name="Rubens C.E."/>
            <person name="Grandi G."/>
            <person name="Madoff L.C."/>
            <person name="Kasper D.L."/>
            <person name="Telford J.L."/>
            <person name="Wessels M.R."/>
            <person name="Rappuoli R."/>
            <person name="Fraser C.M."/>
        </authorList>
    </citation>
    <scope>NUCLEOTIDE SEQUENCE [LARGE SCALE GENOMIC DNA]</scope>
    <source>
        <strain>ATCC 27591 / A909 / CDC SS700</strain>
    </source>
</reference>
<keyword id="KW-0067">ATP-binding</keyword>
<keyword id="KW-0238">DNA-binding</keyword>
<keyword id="KW-0479">Metal-binding</keyword>
<keyword id="KW-0547">Nucleotide-binding</keyword>
<keyword id="KW-0678">Repressor</keyword>
<keyword id="KW-0804">Transcription</keyword>
<keyword id="KW-0805">Transcription regulation</keyword>
<keyword id="KW-0862">Zinc</keyword>
<keyword id="KW-0863">Zinc-finger</keyword>
<organism>
    <name type="scientific">Streptococcus agalactiae serotype Ia (strain ATCC 27591 / A909 / CDC SS700)</name>
    <dbReference type="NCBI Taxonomy" id="205921"/>
    <lineage>
        <taxon>Bacteria</taxon>
        <taxon>Bacillati</taxon>
        <taxon>Bacillota</taxon>
        <taxon>Bacilli</taxon>
        <taxon>Lactobacillales</taxon>
        <taxon>Streptococcaceae</taxon>
        <taxon>Streptococcus</taxon>
    </lineage>
</organism>
<evidence type="ECO:0000255" key="1">
    <source>
        <dbReference type="HAMAP-Rule" id="MF_00440"/>
    </source>
</evidence>
<feature type="chain" id="PRO_0000230898" description="Transcriptional repressor NrdR">
    <location>
        <begin position="1"/>
        <end position="159"/>
    </location>
</feature>
<feature type="domain" description="ATP-cone" evidence="1">
    <location>
        <begin position="49"/>
        <end position="139"/>
    </location>
</feature>
<feature type="zinc finger region" evidence="1">
    <location>
        <begin position="3"/>
        <end position="34"/>
    </location>
</feature>
<dbReference type="EMBL" id="CP000114">
    <property type="protein sequence ID" value="ABA46085.1"/>
    <property type="molecule type" value="Genomic_DNA"/>
</dbReference>
<dbReference type="RefSeq" id="WP_001203682.1">
    <property type="nucleotide sequence ID" value="NC_007432.1"/>
</dbReference>
<dbReference type="SMR" id="Q3JZR3"/>
<dbReference type="GeneID" id="66886467"/>
<dbReference type="KEGG" id="sak:SAK_1637"/>
<dbReference type="HOGENOM" id="CLU_108412_0_0_9"/>
<dbReference type="GO" id="GO:0005524">
    <property type="term" value="F:ATP binding"/>
    <property type="evidence" value="ECO:0007669"/>
    <property type="project" value="UniProtKB-KW"/>
</dbReference>
<dbReference type="GO" id="GO:0003677">
    <property type="term" value="F:DNA binding"/>
    <property type="evidence" value="ECO:0007669"/>
    <property type="project" value="UniProtKB-KW"/>
</dbReference>
<dbReference type="GO" id="GO:0008270">
    <property type="term" value="F:zinc ion binding"/>
    <property type="evidence" value="ECO:0007669"/>
    <property type="project" value="UniProtKB-UniRule"/>
</dbReference>
<dbReference type="GO" id="GO:0045892">
    <property type="term" value="P:negative regulation of DNA-templated transcription"/>
    <property type="evidence" value="ECO:0007669"/>
    <property type="project" value="UniProtKB-UniRule"/>
</dbReference>
<dbReference type="HAMAP" id="MF_00440">
    <property type="entry name" value="NrdR"/>
    <property type="match status" value="1"/>
</dbReference>
<dbReference type="InterPro" id="IPR005144">
    <property type="entry name" value="ATP-cone_dom"/>
</dbReference>
<dbReference type="InterPro" id="IPR055173">
    <property type="entry name" value="NrdR-like_N"/>
</dbReference>
<dbReference type="InterPro" id="IPR003796">
    <property type="entry name" value="RNR_NrdR-like"/>
</dbReference>
<dbReference type="NCBIfam" id="TIGR00244">
    <property type="entry name" value="transcriptional regulator NrdR"/>
    <property type="match status" value="1"/>
</dbReference>
<dbReference type="PANTHER" id="PTHR30455">
    <property type="entry name" value="TRANSCRIPTIONAL REPRESSOR NRDR"/>
    <property type="match status" value="1"/>
</dbReference>
<dbReference type="PANTHER" id="PTHR30455:SF2">
    <property type="entry name" value="TRANSCRIPTIONAL REPRESSOR NRDR"/>
    <property type="match status" value="1"/>
</dbReference>
<dbReference type="Pfam" id="PF03477">
    <property type="entry name" value="ATP-cone"/>
    <property type="match status" value="1"/>
</dbReference>
<dbReference type="Pfam" id="PF22811">
    <property type="entry name" value="Zn_ribbon_NrdR"/>
    <property type="match status" value="1"/>
</dbReference>
<dbReference type="PROSITE" id="PS51161">
    <property type="entry name" value="ATP_CONE"/>
    <property type="match status" value="1"/>
</dbReference>
<name>NRDR_STRA1</name>
<comment type="function">
    <text evidence="1">Negatively regulates transcription of bacterial ribonucleotide reductase nrd genes and operons by binding to NrdR-boxes.</text>
</comment>
<comment type="cofactor">
    <cofactor evidence="1">
        <name>Zn(2+)</name>
        <dbReference type="ChEBI" id="CHEBI:29105"/>
    </cofactor>
    <text evidence="1">Binds 1 zinc ion.</text>
</comment>
<comment type="similarity">
    <text evidence="1">Belongs to the NrdR family.</text>
</comment>
<protein>
    <recommendedName>
        <fullName evidence="1">Transcriptional repressor NrdR</fullName>
    </recommendedName>
</protein>